<sequence>MVPSQSHPAKTPRKQLKPPIEAVQSHYDRSNEFFKLWLDPSMTYSCAYFERPDLTLEEAQRAKRDLALSKLGLEPGMTLLDIGCGWGSTMLHAIEKYDVNVIGLTLSANQLAHNKLKFAEIDHTRTDRTKDVRLQGWEQFDEPVDRIISLGAFEHFADGAGDAGFERYDSFFKMCYDVLPDDGRMLLHTIIVPDAKETKELGLTTPMSLLRFIKFILTEIFPGGRLPKISQVDHYSSNAGFTVERYHRIGSHYVPTLNAWAAALEAHKDEAIALQGRQIYDTYMHYLTGCSDLFRDRYTDVCQFTLVK</sequence>
<evidence type="ECO:0000250" key="1"/>
<evidence type="ECO:0000305" key="2"/>
<accession>Q49807</accession>
<reference key="1">
    <citation type="submission" date="1994-03" db="EMBL/GenBank/DDBJ databases">
        <authorList>
            <person name="Smith D.R."/>
            <person name="Robison K."/>
        </authorList>
    </citation>
    <scope>NUCLEOTIDE SEQUENCE [GENOMIC DNA]</scope>
</reference>
<reference key="2">
    <citation type="journal article" date="2001" name="Nature">
        <title>Massive gene decay in the leprosy bacillus.</title>
        <authorList>
            <person name="Cole S.T."/>
            <person name="Eiglmeier K."/>
            <person name="Parkhill J."/>
            <person name="James K.D."/>
            <person name="Thomson N.R."/>
            <person name="Wheeler P.R."/>
            <person name="Honore N."/>
            <person name="Garnier T."/>
            <person name="Churcher C.M."/>
            <person name="Harris D.E."/>
            <person name="Mungall K.L."/>
            <person name="Basham D."/>
            <person name="Brown D."/>
            <person name="Chillingworth T."/>
            <person name="Connor R."/>
            <person name="Davies R.M."/>
            <person name="Devlin K."/>
            <person name="Duthoy S."/>
            <person name="Feltwell T."/>
            <person name="Fraser A."/>
            <person name="Hamlin N."/>
            <person name="Holroyd S."/>
            <person name="Hornsby T."/>
            <person name="Jagels K."/>
            <person name="Lacroix C."/>
            <person name="Maclean J."/>
            <person name="Moule S."/>
            <person name="Murphy L.D."/>
            <person name="Oliver K."/>
            <person name="Quail M.A."/>
            <person name="Rajandream M.A."/>
            <person name="Rutherford K.M."/>
            <person name="Rutter S."/>
            <person name="Seeger K."/>
            <person name="Simon S."/>
            <person name="Simmonds M."/>
            <person name="Skelton J."/>
            <person name="Squares R."/>
            <person name="Squares S."/>
            <person name="Stevens K."/>
            <person name="Taylor K."/>
            <person name="Whitehead S."/>
            <person name="Woodward J.R."/>
            <person name="Barrell B.G."/>
        </authorList>
    </citation>
    <scope>NUCLEOTIDE SEQUENCE [LARGE SCALE GENOMIC DNA]</scope>
    <source>
        <strain>TN</strain>
    </source>
</reference>
<feature type="chain" id="PRO_0000089568" description="Cyclopropane mycolic acid synthase 2">
    <location>
        <begin position="1"/>
        <end position="308"/>
    </location>
</feature>
<feature type="active site" evidence="1">
    <location>
        <position position="290"/>
    </location>
</feature>
<feature type="binding site" evidence="1">
    <location>
        <begin position="44"/>
        <end position="45"/>
    </location>
    <ligand>
        <name>S-adenosyl-L-methionine</name>
        <dbReference type="ChEBI" id="CHEBI:59789"/>
    </ligand>
</feature>
<feature type="binding site" evidence="1">
    <location>
        <begin position="79"/>
        <end position="87"/>
    </location>
    <ligand>
        <name>S-adenosyl-L-methionine</name>
        <dbReference type="ChEBI" id="CHEBI:59789"/>
    </ligand>
</feature>
<feature type="binding site" evidence="1">
    <location>
        <begin position="105"/>
        <end position="110"/>
    </location>
    <ligand>
        <name>S-adenosyl-L-methionine</name>
        <dbReference type="ChEBI" id="CHEBI:59789"/>
    </ligand>
</feature>
<feature type="binding site" evidence="1">
    <location>
        <begin position="137"/>
        <end position="138"/>
    </location>
    <ligand>
        <name>S-adenosyl-L-methionine</name>
        <dbReference type="ChEBI" id="CHEBI:59789"/>
    </ligand>
</feature>
<gene>
    <name type="primary">cmaA2</name>
    <name type="ordered locus">ML2426</name>
    <name type="ORF">B2168_F3_130</name>
</gene>
<dbReference type="EC" id="2.1.1.79"/>
<dbReference type="EMBL" id="U00018">
    <property type="protein sequence ID" value="AAA17222.1"/>
    <property type="molecule type" value="Genomic_DNA"/>
</dbReference>
<dbReference type="EMBL" id="AL583925">
    <property type="protein sequence ID" value="CAC31942.1"/>
    <property type="molecule type" value="Genomic_DNA"/>
</dbReference>
<dbReference type="PIR" id="S72886">
    <property type="entry name" value="S72886"/>
</dbReference>
<dbReference type="RefSeq" id="NP_302570.1">
    <property type="nucleotide sequence ID" value="NC_002677.1"/>
</dbReference>
<dbReference type="RefSeq" id="WP_010908890.1">
    <property type="nucleotide sequence ID" value="NC_002677.1"/>
</dbReference>
<dbReference type="SMR" id="Q49807"/>
<dbReference type="STRING" id="272631.gene:17576288"/>
<dbReference type="KEGG" id="mle:ML2426"/>
<dbReference type="PATRIC" id="fig|272631.5.peg.4664"/>
<dbReference type="Leproma" id="ML2426"/>
<dbReference type="eggNOG" id="COG2230">
    <property type="taxonomic scope" value="Bacteria"/>
</dbReference>
<dbReference type="HOGENOM" id="CLU_026434_3_0_11"/>
<dbReference type="OrthoDB" id="9782855at2"/>
<dbReference type="UniPathway" id="UPA00915"/>
<dbReference type="Proteomes" id="UP000000806">
    <property type="component" value="Chromosome"/>
</dbReference>
<dbReference type="GO" id="GO:0005737">
    <property type="term" value="C:cytoplasm"/>
    <property type="evidence" value="ECO:0007669"/>
    <property type="project" value="UniProtKB-SubCell"/>
</dbReference>
<dbReference type="GO" id="GO:0008825">
    <property type="term" value="F:cyclopropane-fatty-acyl-phospholipid synthase activity"/>
    <property type="evidence" value="ECO:0007669"/>
    <property type="project" value="UniProtKB-EC"/>
</dbReference>
<dbReference type="GO" id="GO:0008610">
    <property type="term" value="P:lipid biosynthetic process"/>
    <property type="evidence" value="ECO:0007669"/>
    <property type="project" value="InterPro"/>
</dbReference>
<dbReference type="GO" id="GO:0032259">
    <property type="term" value="P:methylation"/>
    <property type="evidence" value="ECO:0007669"/>
    <property type="project" value="UniProtKB-KW"/>
</dbReference>
<dbReference type="CDD" id="cd02440">
    <property type="entry name" value="AdoMet_MTases"/>
    <property type="match status" value="1"/>
</dbReference>
<dbReference type="FunFam" id="3.40.50.150:FF:000115">
    <property type="entry name" value="Cyclopropane mycolic acid synthase 1"/>
    <property type="match status" value="1"/>
</dbReference>
<dbReference type="Gene3D" id="3.40.50.150">
    <property type="entry name" value="Vaccinia Virus protein VP39"/>
    <property type="match status" value="1"/>
</dbReference>
<dbReference type="InterPro" id="IPR050723">
    <property type="entry name" value="CFA/CMAS"/>
</dbReference>
<dbReference type="InterPro" id="IPR003333">
    <property type="entry name" value="CMAS"/>
</dbReference>
<dbReference type="InterPro" id="IPR047672">
    <property type="entry name" value="CMAS_actinobact"/>
</dbReference>
<dbReference type="InterPro" id="IPR029063">
    <property type="entry name" value="SAM-dependent_MTases_sf"/>
</dbReference>
<dbReference type="NCBIfam" id="NF040660">
    <property type="entry name" value="mycolic_MTase"/>
    <property type="match status" value="1"/>
</dbReference>
<dbReference type="PANTHER" id="PTHR43667">
    <property type="entry name" value="CYCLOPROPANE-FATTY-ACYL-PHOSPHOLIPID SYNTHASE"/>
    <property type="match status" value="1"/>
</dbReference>
<dbReference type="PANTHER" id="PTHR43667:SF1">
    <property type="entry name" value="CYCLOPROPANE-FATTY-ACYL-PHOSPHOLIPID SYNTHASE"/>
    <property type="match status" value="1"/>
</dbReference>
<dbReference type="Pfam" id="PF02353">
    <property type="entry name" value="CMAS"/>
    <property type="match status" value="1"/>
</dbReference>
<dbReference type="PIRSF" id="PIRSF003085">
    <property type="entry name" value="CMAS"/>
    <property type="match status" value="1"/>
</dbReference>
<dbReference type="SUPFAM" id="SSF53335">
    <property type="entry name" value="S-adenosyl-L-methionine-dependent methyltransferases"/>
    <property type="match status" value="1"/>
</dbReference>
<protein>
    <recommendedName>
        <fullName>Cyclopropane mycolic acid synthase 2</fullName>
        <shortName>CMAS</shortName>
        <ecNumber>2.1.1.79</ecNumber>
    </recommendedName>
    <alternativeName>
        <fullName>Cyclopropane-fatty-acyl-phospholipid synthase</fullName>
        <shortName>CFA synthase</shortName>
        <shortName>Cyclopropane fatty acid synthase</shortName>
    </alternativeName>
    <alternativeName>
        <fullName>Mycolic acid methyltransferase</fullName>
        <shortName>MA-MT</shortName>
    </alternativeName>
    <alternativeName>
        <fullName>S-adenosylmethionine-dependent methyltransferase</fullName>
        <shortName>AdoMet-MT</shortName>
        <shortName>SAM-MT</shortName>
    </alternativeName>
</protein>
<comment type="function">
    <text evidence="1">Catalyzes the formation of trans cyclopropanated ketomycolate or methoxymycolate through the conversion of a double bond to a cyclopropane ring at the proximal position of an oxygenated mycolic acid via the transfer of a methylene group from S-adenosyl-L-methionine. In the absence of MmaA2, CmaA2 has a non-specific cis-cyclopropanating activity and is able to catalyze the conversion of a double bond to a cis cyclopropane ring at the distal position of an alpha mycolic acid. Cyclopropanated mycolic acids are key factors participating in cell envelope permeability, host immunomodulation and persistence (By similarity).</text>
</comment>
<comment type="catalytic activity">
    <reaction>
        <text>a 1-acyl-2-(9Z)-enoyl-sn-glycero-3-phospholipid + S-adenosyl-L-methionine = a 1-acyl-2-(9-cyclopronane)-acyl-sn-glycero-3-phospholipid + S-adenosyl-L-homocysteine + H(+)</text>
        <dbReference type="Rhea" id="RHEA:11988"/>
        <dbReference type="ChEBI" id="CHEBI:15378"/>
        <dbReference type="ChEBI" id="CHEBI:57856"/>
        <dbReference type="ChEBI" id="CHEBI:59789"/>
        <dbReference type="ChEBI" id="CHEBI:76593"/>
        <dbReference type="ChEBI" id="CHEBI:76594"/>
        <dbReference type="EC" id="2.1.1.79"/>
    </reaction>
</comment>
<comment type="pathway">
    <text>Lipid metabolism; mycolic acid biosynthesis.</text>
</comment>
<comment type="subunit">
    <text evidence="1">Homodimer.</text>
</comment>
<comment type="subcellular location">
    <subcellularLocation>
        <location evidence="1">Cytoplasm</location>
    </subcellularLocation>
</comment>
<comment type="similarity">
    <text evidence="2">Belongs to the CFA/CMAS family.</text>
</comment>
<proteinExistence type="inferred from homology"/>
<organism>
    <name type="scientific">Mycobacterium leprae (strain TN)</name>
    <dbReference type="NCBI Taxonomy" id="272631"/>
    <lineage>
        <taxon>Bacteria</taxon>
        <taxon>Bacillati</taxon>
        <taxon>Actinomycetota</taxon>
        <taxon>Actinomycetes</taxon>
        <taxon>Mycobacteriales</taxon>
        <taxon>Mycobacteriaceae</taxon>
        <taxon>Mycobacterium</taxon>
    </lineage>
</organism>
<keyword id="KW-0963">Cytoplasm</keyword>
<keyword id="KW-0444">Lipid biosynthesis</keyword>
<keyword id="KW-0443">Lipid metabolism</keyword>
<keyword id="KW-0489">Methyltransferase</keyword>
<keyword id="KW-1185">Reference proteome</keyword>
<keyword id="KW-0949">S-adenosyl-L-methionine</keyword>
<keyword id="KW-0808">Transferase</keyword>
<name>CMAS2_MYCLE</name>